<organism>
    <name type="scientific">Streptococcus pyogenes serotype M12 (strain MGAS9429)</name>
    <dbReference type="NCBI Taxonomy" id="370551"/>
    <lineage>
        <taxon>Bacteria</taxon>
        <taxon>Bacillati</taxon>
        <taxon>Bacillota</taxon>
        <taxon>Bacilli</taxon>
        <taxon>Lactobacillales</taxon>
        <taxon>Streptococcaceae</taxon>
        <taxon>Streptococcus</taxon>
    </lineage>
</organism>
<reference key="1">
    <citation type="journal article" date="2006" name="Proc. Natl. Acad. Sci. U.S.A.">
        <title>Molecular genetic anatomy of inter- and intraserotype variation in the human bacterial pathogen group A Streptococcus.</title>
        <authorList>
            <person name="Beres S.B."/>
            <person name="Richter E.W."/>
            <person name="Nagiec M.J."/>
            <person name="Sumby P."/>
            <person name="Porcella S.F."/>
            <person name="DeLeo F.R."/>
            <person name="Musser J.M."/>
        </authorList>
    </citation>
    <scope>NUCLEOTIDE SEQUENCE [LARGE SCALE GENOMIC DNA]</scope>
    <source>
        <strain>MGAS9429</strain>
    </source>
</reference>
<accession>Q1JKA0</accession>
<comment type="function">
    <text evidence="1">Catalyzes the interconversion of L-alanine and D-alanine. May also act on other amino acids.</text>
</comment>
<comment type="catalytic activity">
    <reaction evidence="1">
        <text>L-alanine = D-alanine</text>
        <dbReference type="Rhea" id="RHEA:20249"/>
        <dbReference type="ChEBI" id="CHEBI:57416"/>
        <dbReference type="ChEBI" id="CHEBI:57972"/>
        <dbReference type="EC" id="5.1.1.1"/>
    </reaction>
</comment>
<comment type="cofactor">
    <cofactor evidence="1">
        <name>pyridoxal 5'-phosphate</name>
        <dbReference type="ChEBI" id="CHEBI:597326"/>
    </cofactor>
</comment>
<comment type="pathway">
    <text evidence="1">Amino-acid biosynthesis; D-alanine biosynthesis; D-alanine from L-alanine: step 1/1.</text>
</comment>
<comment type="similarity">
    <text evidence="1">Belongs to the alanine racemase family.</text>
</comment>
<feature type="chain" id="PRO_1000066047" description="Alanine racemase">
    <location>
        <begin position="1"/>
        <end position="366"/>
    </location>
</feature>
<feature type="active site" description="Proton acceptor; specific for D-alanine" evidence="1">
    <location>
        <position position="40"/>
    </location>
</feature>
<feature type="active site" description="Proton acceptor; specific for L-alanine" evidence="1">
    <location>
        <position position="263"/>
    </location>
</feature>
<feature type="binding site" evidence="1">
    <location>
        <position position="136"/>
    </location>
    <ligand>
        <name>substrate</name>
    </ligand>
</feature>
<feature type="binding site" evidence="1">
    <location>
        <position position="310"/>
    </location>
    <ligand>
        <name>substrate</name>
    </ligand>
</feature>
<feature type="modified residue" description="N6-(pyridoxal phosphate)lysine" evidence="1">
    <location>
        <position position="40"/>
    </location>
</feature>
<dbReference type="EC" id="5.1.1.1" evidence="1"/>
<dbReference type="EMBL" id="CP000259">
    <property type="protein sequence ID" value="ABF32723.1"/>
    <property type="molecule type" value="Genomic_DNA"/>
</dbReference>
<dbReference type="RefSeq" id="WP_002988532.1">
    <property type="nucleotide sequence ID" value="NC_008021.1"/>
</dbReference>
<dbReference type="SMR" id="Q1JKA0"/>
<dbReference type="KEGG" id="spk:MGAS9429_Spy1536"/>
<dbReference type="HOGENOM" id="CLU_028393_2_1_9"/>
<dbReference type="UniPathway" id="UPA00042">
    <property type="reaction ID" value="UER00497"/>
</dbReference>
<dbReference type="Proteomes" id="UP000002433">
    <property type="component" value="Chromosome"/>
</dbReference>
<dbReference type="GO" id="GO:0005829">
    <property type="term" value="C:cytosol"/>
    <property type="evidence" value="ECO:0007669"/>
    <property type="project" value="TreeGrafter"/>
</dbReference>
<dbReference type="GO" id="GO:0008784">
    <property type="term" value="F:alanine racemase activity"/>
    <property type="evidence" value="ECO:0007669"/>
    <property type="project" value="UniProtKB-UniRule"/>
</dbReference>
<dbReference type="GO" id="GO:0030170">
    <property type="term" value="F:pyridoxal phosphate binding"/>
    <property type="evidence" value="ECO:0007669"/>
    <property type="project" value="UniProtKB-UniRule"/>
</dbReference>
<dbReference type="GO" id="GO:0030632">
    <property type="term" value="P:D-alanine biosynthetic process"/>
    <property type="evidence" value="ECO:0007669"/>
    <property type="project" value="UniProtKB-UniRule"/>
</dbReference>
<dbReference type="GO" id="GO:0009252">
    <property type="term" value="P:peptidoglycan biosynthetic process"/>
    <property type="evidence" value="ECO:0007669"/>
    <property type="project" value="TreeGrafter"/>
</dbReference>
<dbReference type="CDD" id="cd00430">
    <property type="entry name" value="PLPDE_III_AR"/>
    <property type="match status" value="1"/>
</dbReference>
<dbReference type="FunFam" id="2.40.37.10:FF:000006">
    <property type="entry name" value="Alanine racemase"/>
    <property type="match status" value="1"/>
</dbReference>
<dbReference type="FunFam" id="3.20.20.10:FF:000002">
    <property type="entry name" value="Alanine racemase"/>
    <property type="match status" value="1"/>
</dbReference>
<dbReference type="Gene3D" id="3.20.20.10">
    <property type="entry name" value="Alanine racemase"/>
    <property type="match status" value="1"/>
</dbReference>
<dbReference type="Gene3D" id="2.40.37.10">
    <property type="entry name" value="Lyase, Ornithine Decarboxylase, Chain A, domain 1"/>
    <property type="match status" value="1"/>
</dbReference>
<dbReference type="HAMAP" id="MF_01201">
    <property type="entry name" value="Ala_racemase"/>
    <property type="match status" value="1"/>
</dbReference>
<dbReference type="InterPro" id="IPR000821">
    <property type="entry name" value="Ala_racemase"/>
</dbReference>
<dbReference type="InterPro" id="IPR009006">
    <property type="entry name" value="Ala_racemase/Decarboxylase_C"/>
</dbReference>
<dbReference type="InterPro" id="IPR011079">
    <property type="entry name" value="Ala_racemase_C"/>
</dbReference>
<dbReference type="InterPro" id="IPR001608">
    <property type="entry name" value="Ala_racemase_N"/>
</dbReference>
<dbReference type="InterPro" id="IPR020622">
    <property type="entry name" value="Ala_racemase_pyridoxalP-BS"/>
</dbReference>
<dbReference type="InterPro" id="IPR029066">
    <property type="entry name" value="PLP-binding_barrel"/>
</dbReference>
<dbReference type="NCBIfam" id="TIGR00492">
    <property type="entry name" value="alr"/>
    <property type="match status" value="1"/>
</dbReference>
<dbReference type="PANTHER" id="PTHR30511">
    <property type="entry name" value="ALANINE RACEMASE"/>
    <property type="match status" value="1"/>
</dbReference>
<dbReference type="PANTHER" id="PTHR30511:SF0">
    <property type="entry name" value="ALANINE RACEMASE, CATABOLIC-RELATED"/>
    <property type="match status" value="1"/>
</dbReference>
<dbReference type="Pfam" id="PF00842">
    <property type="entry name" value="Ala_racemase_C"/>
    <property type="match status" value="1"/>
</dbReference>
<dbReference type="Pfam" id="PF01168">
    <property type="entry name" value="Ala_racemase_N"/>
    <property type="match status" value="1"/>
</dbReference>
<dbReference type="PRINTS" id="PR00992">
    <property type="entry name" value="ALARACEMASE"/>
</dbReference>
<dbReference type="SMART" id="SM01005">
    <property type="entry name" value="Ala_racemase_C"/>
    <property type="match status" value="1"/>
</dbReference>
<dbReference type="SUPFAM" id="SSF50621">
    <property type="entry name" value="Alanine racemase C-terminal domain-like"/>
    <property type="match status" value="1"/>
</dbReference>
<dbReference type="SUPFAM" id="SSF51419">
    <property type="entry name" value="PLP-binding barrel"/>
    <property type="match status" value="1"/>
</dbReference>
<dbReference type="PROSITE" id="PS00395">
    <property type="entry name" value="ALANINE_RACEMASE"/>
    <property type="match status" value="1"/>
</dbReference>
<gene>
    <name type="primary">alr</name>
    <name type="ordered locus">MGAS9429_Spy1536</name>
</gene>
<keyword id="KW-0413">Isomerase</keyword>
<keyword id="KW-0663">Pyridoxal phosphate</keyword>
<proteinExistence type="inferred from homology"/>
<sequence length="366" mass="39919">MISSFHRPTVARVNLQAIKENVASVQKHIPLGVKTYAVVKADAYGHGAVQVSKALLPQVDGYCVSNLDEALQLRQAGIDKEILILGVLLPNELELAVANAITVTIASLDWIALARLEKKECQGLKVHVKVDSGMGRIGLRSSKEVNLLIDSLKELGADVEGIFTHFATADEADDTKFNQQLQFFKKLIAGLEDKPRLVHASNSATSIWHSDTIFNAVRLGIVSYGLNPSGSDLSLPFPLQEALSLESSLVHVKMISAGDTVGYGVTYTAKKSEYVGTVPIGYADGWTRNMQGFSVLVDGQFCEIIGRVSMDQLTIRLSKAYPLGTKVTLIGSNQQKNISTTDIANYRNTINYEVLCLLSDRIPRIY</sequence>
<name>ALR_STRPC</name>
<evidence type="ECO:0000255" key="1">
    <source>
        <dbReference type="HAMAP-Rule" id="MF_01201"/>
    </source>
</evidence>
<protein>
    <recommendedName>
        <fullName evidence="1">Alanine racemase</fullName>
        <ecNumber evidence="1">5.1.1.1</ecNumber>
    </recommendedName>
</protein>